<protein>
    <recommendedName>
        <fullName evidence="6">Riboflavin-binding protein RibY</fullName>
    </recommendedName>
</protein>
<name>RIBY_CHLAA</name>
<reference key="1">
    <citation type="journal article" date="2011" name="BMC Genomics">
        <title>Complete genome sequence of the filamentous anoxygenic phototrophic bacterium Chloroflexus aurantiacus.</title>
        <authorList>
            <person name="Tang K.H."/>
            <person name="Barry K."/>
            <person name="Chertkov O."/>
            <person name="Dalin E."/>
            <person name="Han C.S."/>
            <person name="Hauser L.J."/>
            <person name="Honchak B.M."/>
            <person name="Karbach L.E."/>
            <person name="Land M.L."/>
            <person name="Lapidus A."/>
            <person name="Larimer F.W."/>
            <person name="Mikhailova N."/>
            <person name="Pitluck S."/>
            <person name="Pierson B.K."/>
            <person name="Blankenship R.E."/>
        </authorList>
    </citation>
    <scope>NUCLEOTIDE SEQUENCE [LARGE SCALE GENOMIC DNA]</scope>
    <source>
        <strain>ATCC 29366 / DSM 635 / J-10-fl</strain>
    </source>
</reference>
<reference key="2">
    <citation type="journal article" date="2015" name="Environ. Microbiol. Rep.">
        <title>Genomic distribution of B-vitamin auxotrophy and uptake transporters in environmental bacteria from the Chloroflexi phylum.</title>
        <authorList>
            <person name="Rodionova I.A."/>
            <person name="Li X."/>
            <person name="Plymale A.E."/>
            <person name="Motamedchaboki K."/>
            <person name="Konopka A.E."/>
            <person name="Romine M.F."/>
            <person name="Fredrickson J.K."/>
            <person name="Osterman A.L."/>
            <person name="Rodionov D.A."/>
        </authorList>
    </citation>
    <scope>SUBUNIT</scope>
    <scope>RIBOFLAVIN BINDING</scope>
    <source>
        <strain>ATCC 29366 / DSM 635 / J-10-fl</strain>
    </source>
</reference>
<reference key="3">
    <citation type="journal article" date="2015" name="PLoS ONE">
        <title>Extensive identification of bacterial riboflavin transporters and their distribution across bacterial species.</title>
        <authorList>
            <person name="Gutierrez-Preciado A."/>
            <person name="Torres A.G."/>
            <person name="Merino E."/>
            <person name="Bonomi H.R."/>
            <person name="Goldbaum F.A."/>
            <person name="Garcia-Angulo V.A."/>
        </authorList>
    </citation>
    <scope>FUNCTION</scope>
    <scope>INDUCTION</scope>
    <source>
        <strain>ATCC 29366 / DSM 635 / J-10-fl</strain>
    </source>
</reference>
<keyword id="KW-1003">Cell membrane</keyword>
<keyword id="KW-0449">Lipoprotein</keyword>
<keyword id="KW-0472">Membrane</keyword>
<keyword id="KW-0564">Palmitate</keyword>
<keyword id="KW-1185">Reference proteome</keyword>
<keyword id="KW-0732">Signal</keyword>
<accession>A9WGD2</accession>
<comment type="function">
    <text evidence="2 3">Part of an ABC transporter complex that transports riboflavin into the cell (PubMed:25938806). Binds riboflavin (PubMed:25345570).</text>
</comment>
<comment type="subunit">
    <text evidence="7">The complex is likely composed of an ATP-binding protein, a transmembrane protein (RibX) and a solute-binding protein (RibY).</text>
</comment>
<comment type="subcellular location">
    <subcellularLocation>
        <location evidence="1">Cell membrane</location>
        <topology evidence="1">Lipid-anchor</topology>
    </subcellularLocation>
</comment>
<comment type="induction">
    <text evidence="3">Expression is probably regulated by riboflavin, via an FMN riboswitch.</text>
</comment>
<comment type="similarity">
    <text evidence="6">Belongs to the NMT1 family.</text>
</comment>
<gene>
    <name evidence="4 5" type="primary">ribY</name>
    <name evidence="8" type="ordered locus">Caur_0817</name>
</gene>
<proteinExistence type="evidence at protein level"/>
<feature type="signal peptide" evidence="1">
    <location>
        <begin position="1"/>
        <end position="19"/>
    </location>
</feature>
<feature type="chain" id="PRO_5002745825" description="Riboflavin-binding protein RibY">
    <location>
        <begin position="20"/>
        <end position="351"/>
    </location>
</feature>
<feature type="lipid moiety-binding region" description="N-palmitoyl cysteine" evidence="1">
    <location>
        <position position="20"/>
    </location>
</feature>
<feature type="lipid moiety-binding region" description="S-diacylglycerol cysteine" evidence="1">
    <location>
        <position position="20"/>
    </location>
</feature>
<organism>
    <name type="scientific">Chloroflexus aurantiacus (strain ATCC 29366 / DSM 635 / J-10-fl)</name>
    <dbReference type="NCBI Taxonomy" id="324602"/>
    <lineage>
        <taxon>Bacteria</taxon>
        <taxon>Bacillati</taxon>
        <taxon>Chloroflexota</taxon>
        <taxon>Chloroflexia</taxon>
        <taxon>Chloroflexales</taxon>
        <taxon>Chloroflexineae</taxon>
        <taxon>Chloroflexaceae</taxon>
        <taxon>Chloroflexus</taxon>
    </lineage>
</organism>
<evidence type="ECO:0000255" key="1">
    <source>
        <dbReference type="PROSITE-ProRule" id="PRU00303"/>
    </source>
</evidence>
<evidence type="ECO:0000269" key="2">
    <source>
    </source>
</evidence>
<evidence type="ECO:0000269" key="3">
    <source>
    </source>
</evidence>
<evidence type="ECO:0000303" key="4">
    <source>
    </source>
</evidence>
<evidence type="ECO:0000303" key="5">
    <source>
    </source>
</evidence>
<evidence type="ECO:0000305" key="6"/>
<evidence type="ECO:0000305" key="7">
    <source>
    </source>
</evidence>
<evidence type="ECO:0000312" key="8">
    <source>
        <dbReference type="EMBL" id="ABY34053.1"/>
    </source>
</evidence>
<dbReference type="EMBL" id="CP000909">
    <property type="protein sequence ID" value="ABY34053.1"/>
    <property type="molecule type" value="Genomic_DNA"/>
</dbReference>
<dbReference type="RefSeq" id="WP_012256709.1">
    <property type="nucleotide sequence ID" value="NC_010175.1"/>
</dbReference>
<dbReference type="RefSeq" id="YP_001634442.1">
    <property type="nucleotide sequence ID" value="NC_010175.1"/>
</dbReference>
<dbReference type="SMR" id="A9WGD2"/>
<dbReference type="STRING" id="324602.Caur_0817"/>
<dbReference type="TCDB" id="3.A.1.17.14">
    <property type="family name" value="the atp-binding cassette (abc) superfamily"/>
</dbReference>
<dbReference type="EnsemblBacteria" id="ABY34053">
    <property type="protein sequence ID" value="ABY34053"/>
    <property type="gene ID" value="Caur_0817"/>
</dbReference>
<dbReference type="KEGG" id="cau:Caur_0817"/>
<dbReference type="PATRIC" id="fig|324602.8.peg.931"/>
<dbReference type="eggNOG" id="COG0715">
    <property type="taxonomic scope" value="Bacteria"/>
</dbReference>
<dbReference type="HOGENOM" id="CLU_028871_1_0_0"/>
<dbReference type="InParanoid" id="A9WGD2"/>
<dbReference type="Proteomes" id="UP000002008">
    <property type="component" value="Chromosome"/>
</dbReference>
<dbReference type="GO" id="GO:0005886">
    <property type="term" value="C:plasma membrane"/>
    <property type="evidence" value="ECO:0007669"/>
    <property type="project" value="UniProtKB-SubCell"/>
</dbReference>
<dbReference type="GO" id="GO:0009228">
    <property type="term" value="P:thiamine biosynthetic process"/>
    <property type="evidence" value="ECO:0000318"/>
    <property type="project" value="GO_Central"/>
</dbReference>
<dbReference type="Gene3D" id="3.40.190.10">
    <property type="entry name" value="Periplasmic binding protein-like II"/>
    <property type="match status" value="2"/>
</dbReference>
<dbReference type="InterPro" id="IPR027939">
    <property type="entry name" value="NMT1/THI5"/>
</dbReference>
<dbReference type="InterPro" id="IPR015168">
    <property type="entry name" value="SsuA/THI5"/>
</dbReference>
<dbReference type="PANTHER" id="PTHR31528">
    <property type="entry name" value="4-AMINO-5-HYDROXYMETHYL-2-METHYLPYRIMIDINE PHOSPHATE SYNTHASE THI11-RELATED"/>
    <property type="match status" value="1"/>
</dbReference>
<dbReference type="PANTHER" id="PTHR31528:SF15">
    <property type="entry name" value="RIBOFLAVIN-BINDING PROTEIN RIBY"/>
    <property type="match status" value="1"/>
</dbReference>
<dbReference type="Pfam" id="PF09084">
    <property type="entry name" value="NMT1"/>
    <property type="match status" value="1"/>
</dbReference>
<dbReference type="SUPFAM" id="SSF53850">
    <property type="entry name" value="Periplasmic binding protein-like II"/>
    <property type="match status" value="1"/>
</dbReference>
<dbReference type="PROSITE" id="PS51257">
    <property type="entry name" value="PROKAR_LIPOPROTEIN"/>
    <property type="match status" value="1"/>
</dbReference>
<sequence length="351" mass="37700">MMKLRVLTLGILIILLITACSAPTPTTPAAAPTAAPAPNAQPTLQQVTLAMSYIPNIQFAPYYVAAAKGYYAAEGIEVVFDYNFENDVLQRAATWPTSGVAFATTSGTSVLLARQQGLPVKTVMTLYQRFPIAFFAKSNVPLASVNDLRGQTIGIPGRFGESFYALLAALYAGGMSEADVTVQEIGFTQTAAVMEDKVPVAIGYAMNEPVQLRGQGVEVNVLLAADVFNLAANGIAVSEALIAQNPELVRKFVRASLRGLADTLANPDEAFDLSLQFIPEAQLGDLSLQRQVLQESLPFWQNELTAQYGLGYTDGQLWTRTEEFMRAAGLLSAPVDVQQAFTNEFVPGGSY</sequence>